<reference key="1">
    <citation type="journal article" date="1994" name="Oncogene">
        <title>Isolation of two novel ras genes in Dictyostelium discoideum; evidence for a complex, developmentally regulated ras gene subfamily.</title>
        <authorList>
            <person name="Daniel J.M."/>
            <person name="Bush J."/>
            <person name="Cardelli J."/>
            <person name="Spiegelman G.B."/>
            <person name="Weeks G."/>
        </authorList>
    </citation>
    <scope>NUCLEOTIDE SEQUENCE [GENOMIC DNA]</scope>
</reference>
<reference key="2">
    <citation type="journal article" date="2005" name="Nature">
        <title>The genome of the social amoeba Dictyostelium discoideum.</title>
        <authorList>
            <person name="Eichinger L."/>
            <person name="Pachebat J.A."/>
            <person name="Gloeckner G."/>
            <person name="Rajandream M.A."/>
            <person name="Sucgang R."/>
            <person name="Berriman M."/>
            <person name="Song J."/>
            <person name="Olsen R."/>
            <person name="Szafranski K."/>
            <person name="Xu Q."/>
            <person name="Tunggal B."/>
            <person name="Kummerfeld S."/>
            <person name="Madera M."/>
            <person name="Konfortov B.A."/>
            <person name="Rivero F."/>
            <person name="Bankier A.T."/>
            <person name="Lehmann R."/>
            <person name="Hamlin N."/>
            <person name="Davies R."/>
            <person name="Gaudet P."/>
            <person name="Fey P."/>
            <person name="Pilcher K."/>
            <person name="Chen G."/>
            <person name="Saunders D."/>
            <person name="Sodergren E.J."/>
            <person name="Davis P."/>
            <person name="Kerhornou A."/>
            <person name="Nie X."/>
            <person name="Hall N."/>
            <person name="Anjard C."/>
            <person name="Hemphill L."/>
            <person name="Bason N."/>
            <person name="Farbrother P."/>
            <person name="Desany B."/>
            <person name="Just E."/>
            <person name="Morio T."/>
            <person name="Rost R."/>
            <person name="Churcher C.M."/>
            <person name="Cooper J."/>
            <person name="Haydock S."/>
            <person name="van Driessche N."/>
            <person name="Cronin A."/>
            <person name="Goodhead I."/>
            <person name="Muzny D.M."/>
            <person name="Mourier T."/>
            <person name="Pain A."/>
            <person name="Lu M."/>
            <person name="Harper D."/>
            <person name="Lindsay R."/>
            <person name="Hauser H."/>
            <person name="James K.D."/>
            <person name="Quiles M."/>
            <person name="Madan Babu M."/>
            <person name="Saito T."/>
            <person name="Buchrieser C."/>
            <person name="Wardroper A."/>
            <person name="Felder M."/>
            <person name="Thangavelu M."/>
            <person name="Johnson D."/>
            <person name="Knights A."/>
            <person name="Loulseged H."/>
            <person name="Mungall K.L."/>
            <person name="Oliver K."/>
            <person name="Price C."/>
            <person name="Quail M.A."/>
            <person name="Urushihara H."/>
            <person name="Hernandez J."/>
            <person name="Rabbinowitsch E."/>
            <person name="Steffen D."/>
            <person name="Sanders M."/>
            <person name="Ma J."/>
            <person name="Kohara Y."/>
            <person name="Sharp S."/>
            <person name="Simmonds M.N."/>
            <person name="Spiegler S."/>
            <person name="Tivey A."/>
            <person name="Sugano S."/>
            <person name="White B."/>
            <person name="Walker D."/>
            <person name="Woodward J.R."/>
            <person name="Winckler T."/>
            <person name="Tanaka Y."/>
            <person name="Shaulsky G."/>
            <person name="Schleicher M."/>
            <person name="Weinstock G.M."/>
            <person name="Rosenthal A."/>
            <person name="Cox E.C."/>
            <person name="Chisholm R.L."/>
            <person name="Gibbs R.A."/>
            <person name="Loomis W.F."/>
            <person name="Platzer M."/>
            <person name="Kay R.R."/>
            <person name="Williams J.G."/>
            <person name="Dear P.H."/>
            <person name="Noegel A.A."/>
            <person name="Barrell B.G."/>
            <person name="Kuspa A."/>
        </authorList>
    </citation>
    <scope>NUCLEOTIDE SEQUENCE [LARGE SCALE GENOMIC DNA]</scope>
    <source>
        <strain>AX4</strain>
    </source>
</reference>
<reference key="3">
    <citation type="journal article" date="2008" name="Curr. Biol.">
        <title>Spatiotemporal regulation of Ras activity provides directional sensing.</title>
        <authorList>
            <person name="Zhang S."/>
            <person name="Charest P.G."/>
            <person name="Firtel R.A."/>
        </authorList>
    </citation>
    <scope>FUNCTION</scope>
    <scope>CATALYTIC ACTIVITY</scope>
</reference>
<comment type="function">
    <text evidence="2">Ras proteins bind GDP/GTP and possess intrinsic GTPase activity.</text>
</comment>
<comment type="catalytic activity">
    <reaction evidence="4">
        <text>GTP + H2O = GDP + phosphate + H(+)</text>
        <dbReference type="Rhea" id="RHEA:19669"/>
        <dbReference type="ChEBI" id="CHEBI:15377"/>
        <dbReference type="ChEBI" id="CHEBI:15378"/>
        <dbReference type="ChEBI" id="CHEBI:37565"/>
        <dbReference type="ChEBI" id="CHEBI:43474"/>
        <dbReference type="ChEBI" id="CHEBI:58189"/>
        <dbReference type="EC" id="3.6.5.2"/>
    </reaction>
</comment>
<comment type="activity regulation">
    <text>Alternates between an inactive form bound to GDP and an active form bound to GTP. Activated by a guanine nucleotide-exchange factor (GEF) and inactivated by a GTPase-activating protein (GAP).</text>
</comment>
<comment type="subcellular location">
    <subcellularLocation>
        <location evidence="3">Cell membrane</location>
        <topology evidence="3">Lipid-anchor</topology>
        <orientation evidence="3">Cytoplasmic side</orientation>
    </subcellularLocation>
</comment>
<comment type="developmental stage">
    <text>Maximally expressed during early aggregation.</text>
</comment>
<comment type="similarity">
    <text evidence="3">Belongs to the small GTPase superfamily. Ras family.</text>
</comment>
<name>RASC_DICDI</name>
<organism>
    <name type="scientific">Dictyostelium discoideum</name>
    <name type="common">Social amoeba</name>
    <dbReference type="NCBI Taxonomy" id="44689"/>
    <lineage>
        <taxon>Eukaryota</taxon>
        <taxon>Amoebozoa</taxon>
        <taxon>Evosea</taxon>
        <taxon>Eumycetozoa</taxon>
        <taxon>Dictyostelia</taxon>
        <taxon>Dictyosteliales</taxon>
        <taxon>Dictyosteliaceae</taxon>
        <taxon>Dictyostelium</taxon>
    </lineage>
</organism>
<gene>
    <name type="primary">rasC</name>
    <name type="ORF">DDB_G0281385</name>
</gene>
<dbReference type="EC" id="3.6.5.2" evidence="4"/>
<dbReference type="EMBL" id="Z18926">
    <property type="protein sequence ID" value="CAA79359.1"/>
    <property type="molecule type" value="Genomic_DNA"/>
</dbReference>
<dbReference type="EMBL" id="AAFI02000041">
    <property type="protein sequence ID" value="EAL66674.1"/>
    <property type="molecule type" value="Genomic_DNA"/>
</dbReference>
<dbReference type="PIR" id="S31985">
    <property type="entry name" value="S31985"/>
</dbReference>
<dbReference type="RefSeq" id="XP_640683.1">
    <property type="nucleotide sequence ID" value="XM_635591.1"/>
</dbReference>
<dbReference type="SMR" id="P32253"/>
<dbReference type="STRING" id="44689.P32253"/>
<dbReference type="PaxDb" id="44689-DDB0214827"/>
<dbReference type="EnsemblProtists" id="EAL66674">
    <property type="protein sequence ID" value="EAL66674"/>
    <property type="gene ID" value="DDB_G0281385"/>
</dbReference>
<dbReference type="GeneID" id="8623068"/>
<dbReference type="KEGG" id="ddi:DDB_G0281385"/>
<dbReference type="dictyBase" id="DDB_G0281385">
    <property type="gene designation" value="rasC"/>
</dbReference>
<dbReference type="VEuPathDB" id="AmoebaDB:DDB_G0281385"/>
<dbReference type="eggNOG" id="KOG0395">
    <property type="taxonomic scope" value="Eukaryota"/>
</dbReference>
<dbReference type="HOGENOM" id="CLU_041217_9_8_1"/>
<dbReference type="InParanoid" id="P32253"/>
<dbReference type="OMA" id="DRDVYPM"/>
<dbReference type="PhylomeDB" id="P32253"/>
<dbReference type="PRO" id="PR:P32253"/>
<dbReference type="Proteomes" id="UP000002195">
    <property type="component" value="Chromosome 3"/>
</dbReference>
<dbReference type="GO" id="GO:0031252">
    <property type="term" value="C:cell leading edge"/>
    <property type="evidence" value="ECO:0000305"/>
    <property type="project" value="dictyBase"/>
</dbReference>
<dbReference type="GO" id="GO:0005811">
    <property type="term" value="C:lipid droplet"/>
    <property type="evidence" value="ECO:0007005"/>
    <property type="project" value="dictyBase"/>
</dbReference>
<dbReference type="GO" id="GO:0005886">
    <property type="term" value="C:plasma membrane"/>
    <property type="evidence" value="ECO:0000318"/>
    <property type="project" value="GO_Central"/>
</dbReference>
<dbReference type="GO" id="GO:0031932">
    <property type="term" value="C:TORC2 complex"/>
    <property type="evidence" value="ECO:0000314"/>
    <property type="project" value="dictyBase"/>
</dbReference>
<dbReference type="GO" id="GO:0031982">
    <property type="term" value="C:vesicle"/>
    <property type="evidence" value="ECO:0000314"/>
    <property type="project" value="dictyBase"/>
</dbReference>
<dbReference type="GO" id="GO:0010856">
    <property type="term" value="F:adenylate cyclase activator activity"/>
    <property type="evidence" value="ECO:0000316"/>
    <property type="project" value="dictyBase"/>
</dbReference>
<dbReference type="GO" id="GO:0003925">
    <property type="term" value="F:G protein activity"/>
    <property type="evidence" value="ECO:0000314"/>
    <property type="project" value="dictyBase"/>
</dbReference>
<dbReference type="GO" id="GO:0019003">
    <property type="term" value="F:GDP binding"/>
    <property type="evidence" value="ECO:0000318"/>
    <property type="project" value="GO_Central"/>
</dbReference>
<dbReference type="GO" id="GO:0005525">
    <property type="term" value="F:GTP binding"/>
    <property type="evidence" value="ECO:0000314"/>
    <property type="project" value="dictyBase"/>
</dbReference>
<dbReference type="GO" id="GO:0003924">
    <property type="term" value="F:GTPase activity"/>
    <property type="evidence" value="ECO:0000318"/>
    <property type="project" value="GO_Central"/>
</dbReference>
<dbReference type="GO" id="GO:0030250">
    <property type="term" value="F:guanylate cyclase activator activity"/>
    <property type="evidence" value="ECO:0000315"/>
    <property type="project" value="dictyBase"/>
</dbReference>
<dbReference type="GO" id="GO:0019887">
    <property type="term" value="F:protein kinase regulator activity"/>
    <property type="evidence" value="ECO:0000314"/>
    <property type="project" value="dictyBase"/>
</dbReference>
<dbReference type="GO" id="GO:1904841">
    <property type="term" value="F:TORC2 complex binding"/>
    <property type="evidence" value="ECO:0000314"/>
    <property type="project" value="dictyBase"/>
</dbReference>
<dbReference type="GO" id="GO:0030036">
    <property type="term" value="P:actin cytoskeleton organization"/>
    <property type="evidence" value="ECO:0000315"/>
    <property type="project" value="dictyBase"/>
</dbReference>
<dbReference type="GO" id="GO:0007188">
    <property type="term" value="P:adenylate cyclase-modulating G protein-coupled receptor signaling pathway"/>
    <property type="evidence" value="ECO:0000315"/>
    <property type="project" value="dictyBase"/>
</dbReference>
<dbReference type="GO" id="GO:0031152">
    <property type="term" value="P:aggregation involved in sorocarp development"/>
    <property type="evidence" value="ECO:0000315"/>
    <property type="project" value="dictyBase"/>
</dbReference>
<dbReference type="GO" id="GO:0019954">
    <property type="term" value="P:asexual reproduction"/>
    <property type="evidence" value="ECO:0000316"/>
    <property type="project" value="dictyBase"/>
</dbReference>
<dbReference type="GO" id="GO:0048870">
    <property type="term" value="P:cell motility"/>
    <property type="evidence" value="ECO:0000315"/>
    <property type="project" value="dictyBase"/>
</dbReference>
<dbReference type="GO" id="GO:0071321">
    <property type="term" value="P:cellular response to cGMP"/>
    <property type="evidence" value="ECO:0000316"/>
    <property type="project" value="dictyBase"/>
</dbReference>
<dbReference type="GO" id="GO:0043327">
    <property type="term" value="P:chemotaxis to cAMP"/>
    <property type="evidence" value="ECO:0000315"/>
    <property type="project" value="dictyBase"/>
</dbReference>
<dbReference type="GO" id="GO:0043326">
    <property type="term" value="P:chemotaxis to folate"/>
    <property type="evidence" value="ECO:0000315"/>
    <property type="project" value="dictyBase"/>
</dbReference>
<dbReference type="GO" id="GO:0007163">
    <property type="term" value="P:establishment or maintenance of cell polarity"/>
    <property type="evidence" value="ECO:0000315"/>
    <property type="project" value="dictyBase"/>
</dbReference>
<dbReference type="GO" id="GO:0140986">
    <property type="term" value="P:G protein-coupled chemorepellent receptor signaling pathway"/>
    <property type="evidence" value="ECO:0000316"/>
    <property type="project" value="dictyBase"/>
</dbReference>
<dbReference type="GO" id="GO:0120320">
    <property type="term" value="P:lateral pseudopodium retraction"/>
    <property type="evidence" value="ECO:0000315"/>
    <property type="project" value="dictyBase"/>
</dbReference>
<dbReference type="GO" id="GO:0000165">
    <property type="term" value="P:MAPK cascade"/>
    <property type="evidence" value="ECO:0000315"/>
    <property type="project" value="dictyBase"/>
</dbReference>
<dbReference type="GO" id="GO:1903665">
    <property type="term" value="P:negative regulation of asexual reproduction"/>
    <property type="evidence" value="ECO:0000315"/>
    <property type="project" value="dictyBase"/>
</dbReference>
<dbReference type="GO" id="GO:0043491">
    <property type="term" value="P:phosphatidylinositol 3-kinase/protein kinase B signal transduction"/>
    <property type="evidence" value="ECO:0000315"/>
    <property type="project" value="dictyBase"/>
</dbReference>
<dbReference type="GO" id="GO:0110094">
    <property type="term" value="P:polyphosphate-mediated signaling"/>
    <property type="evidence" value="ECO:0000315"/>
    <property type="project" value="dictyBase"/>
</dbReference>
<dbReference type="GO" id="GO:0010753">
    <property type="term" value="P:positive regulation of cGMP-mediated signaling"/>
    <property type="evidence" value="ECO:0000315"/>
    <property type="project" value="dictyBase"/>
</dbReference>
<dbReference type="GO" id="GO:0051491">
    <property type="term" value="P:positive regulation of filopodium assembly"/>
    <property type="evidence" value="ECO:0000315"/>
    <property type="project" value="dictyBase"/>
</dbReference>
<dbReference type="GO" id="GO:0051897">
    <property type="term" value="P:positive regulation of phosphatidylinositol 3-kinase/protein kinase B signal transduction"/>
    <property type="evidence" value="ECO:0000315"/>
    <property type="project" value="dictyBase"/>
</dbReference>
<dbReference type="GO" id="GO:0061122">
    <property type="term" value="P:positive regulation of positive chemotaxis to cAMP"/>
    <property type="evidence" value="ECO:0000315"/>
    <property type="project" value="dictyBase"/>
</dbReference>
<dbReference type="GO" id="GO:1904515">
    <property type="term" value="P:positive regulation of TORC2 signaling"/>
    <property type="evidence" value="ECO:0000314"/>
    <property type="project" value="dictyBase"/>
</dbReference>
<dbReference type="GO" id="GO:0051291">
    <property type="term" value="P:protein heterooligomerization"/>
    <property type="evidence" value="ECO:0000314"/>
    <property type="project" value="dictyBase"/>
</dbReference>
<dbReference type="GO" id="GO:0007265">
    <property type="term" value="P:Ras protein signal transduction"/>
    <property type="evidence" value="ECO:0000315"/>
    <property type="project" value="dictyBase"/>
</dbReference>
<dbReference type="GO" id="GO:0106070">
    <property type="term" value="P:regulation of adenylate cyclase-activating G protein-coupled receptor signaling pathway"/>
    <property type="evidence" value="ECO:0000315"/>
    <property type="project" value="dictyBase"/>
</dbReference>
<dbReference type="GO" id="GO:0001558">
    <property type="term" value="P:regulation of cell growth"/>
    <property type="evidence" value="ECO:0000315"/>
    <property type="project" value="dictyBase"/>
</dbReference>
<dbReference type="GO" id="GO:0051602">
    <property type="term" value="P:response to electrical stimulus"/>
    <property type="evidence" value="ECO:0000315"/>
    <property type="project" value="dictyBase"/>
</dbReference>
<dbReference type="GO" id="GO:0051593">
    <property type="term" value="P:response to folic acid"/>
    <property type="evidence" value="ECO:0000316"/>
    <property type="project" value="dictyBase"/>
</dbReference>
<dbReference type="GO" id="GO:0007165">
    <property type="term" value="P:signal transduction"/>
    <property type="evidence" value="ECO:0000315"/>
    <property type="project" value="dictyBase"/>
</dbReference>
<dbReference type="CDD" id="cd04138">
    <property type="entry name" value="H_N_K_Ras_like"/>
    <property type="match status" value="1"/>
</dbReference>
<dbReference type="FunFam" id="3.40.50.300:FF:000080">
    <property type="entry name" value="Ras-like GTPase Ras1"/>
    <property type="match status" value="1"/>
</dbReference>
<dbReference type="Gene3D" id="3.40.50.300">
    <property type="entry name" value="P-loop containing nucleotide triphosphate hydrolases"/>
    <property type="match status" value="1"/>
</dbReference>
<dbReference type="InterPro" id="IPR027417">
    <property type="entry name" value="P-loop_NTPase"/>
</dbReference>
<dbReference type="InterPro" id="IPR005225">
    <property type="entry name" value="Small_GTP-bd"/>
</dbReference>
<dbReference type="InterPro" id="IPR001806">
    <property type="entry name" value="Small_GTPase"/>
</dbReference>
<dbReference type="InterPro" id="IPR020849">
    <property type="entry name" value="Small_GTPase_Ras-type"/>
</dbReference>
<dbReference type="NCBIfam" id="TIGR00231">
    <property type="entry name" value="small_GTP"/>
    <property type="match status" value="1"/>
</dbReference>
<dbReference type="PANTHER" id="PTHR24070">
    <property type="entry name" value="RAS, DI-RAS, AND RHEB FAMILY MEMBERS OF SMALL GTPASE SUPERFAMILY"/>
    <property type="match status" value="1"/>
</dbReference>
<dbReference type="Pfam" id="PF00071">
    <property type="entry name" value="Ras"/>
    <property type="match status" value="1"/>
</dbReference>
<dbReference type="PRINTS" id="PR00449">
    <property type="entry name" value="RASTRNSFRMNG"/>
</dbReference>
<dbReference type="SMART" id="SM00175">
    <property type="entry name" value="RAB"/>
    <property type="match status" value="1"/>
</dbReference>
<dbReference type="SMART" id="SM00176">
    <property type="entry name" value="RAN"/>
    <property type="match status" value="1"/>
</dbReference>
<dbReference type="SMART" id="SM00173">
    <property type="entry name" value="RAS"/>
    <property type="match status" value="1"/>
</dbReference>
<dbReference type="SMART" id="SM00174">
    <property type="entry name" value="RHO"/>
    <property type="match status" value="1"/>
</dbReference>
<dbReference type="SUPFAM" id="SSF52540">
    <property type="entry name" value="P-loop containing nucleoside triphosphate hydrolases"/>
    <property type="match status" value="1"/>
</dbReference>
<dbReference type="PROSITE" id="PS51421">
    <property type="entry name" value="RAS"/>
    <property type="match status" value="1"/>
</dbReference>
<protein>
    <recommendedName>
        <fullName>Ras-like protein rasC</fullName>
        <ecNumber evidence="4">3.6.5.2</ecNumber>
    </recommendedName>
</protein>
<keyword id="KW-1003">Cell membrane</keyword>
<keyword id="KW-0342">GTP-binding</keyword>
<keyword id="KW-0378">Hydrolase</keyword>
<keyword id="KW-0449">Lipoprotein</keyword>
<keyword id="KW-0472">Membrane</keyword>
<keyword id="KW-0488">Methylation</keyword>
<keyword id="KW-0547">Nucleotide-binding</keyword>
<keyword id="KW-0636">Prenylation</keyword>
<keyword id="KW-1185">Reference proteome</keyword>
<accession>P32253</accession>
<accession>Q54TX8</accession>
<sequence>MSKLLKLVIVGDGGVGKSALTIQLTQNQFIAEYDPTIENSYRKQVNIDEEVYMLDILDTAGQEEYSAMRDQYIRSGRGFLIVYSIISRASFEAVTTFREQILRVKDLSTYPIVIIGNKADLPDKDRKVPPMEGKELAKSFGAPFLETSAKSRVNVEEAFFTLVREIKRWNQNPQNEEMLPPKKRGCIIL</sequence>
<proteinExistence type="evidence at protein level"/>
<feature type="chain" id="PRO_0000082661" description="Ras-like protein rasC">
    <location>
        <begin position="1"/>
        <end position="186"/>
    </location>
</feature>
<feature type="propeptide" id="PRO_0000281309" description="Removed in mature form" evidence="1">
    <location>
        <begin position="187"/>
        <end position="189"/>
    </location>
</feature>
<feature type="short sequence motif" description="Effector region">
    <location>
        <begin position="33"/>
        <end position="41"/>
    </location>
</feature>
<feature type="binding site" evidence="1">
    <location>
        <begin position="11"/>
        <end position="18"/>
    </location>
    <ligand>
        <name>GTP</name>
        <dbReference type="ChEBI" id="CHEBI:37565"/>
    </ligand>
</feature>
<feature type="binding site" evidence="1">
    <location>
        <begin position="58"/>
        <end position="62"/>
    </location>
    <ligand>
        <name>GTP</name>
        <dbReference type="ChEBI" id="CHEBI:37565"/>
    </ligand>
</feature>
<feature type="binding site" evidence="1">
    <location>
        <begin position="117"/>
        <end position="120"/>
    </location>
    <ligand>
        <name>GTP</name>
        <dbReference type="ChEBI" id="CHEBI:37565"/>
    </ligand>
</feature>
<feature type="modified residue" description="Cysteine methyl ester" evidence="1">
    <location>
        <position position="186"/>
    </location>
</feature>
<feature type="lipid moiety-binding region" description="S-geranylgeranyl cysteine" evidence="1">
    <location>
        <position position="186"/>
    </location>
</feature>
<evidence type="ECO:0000250" key="1"/>
<evidence type="ECO:0000269" key="2">
    <source>
    </source>
</evidence>
<evidence type="ECO:0000305" key="3"/>
<evidence type="ECO:0000305" key="4">
    <source>
    </source>
</evidence>